<proteinExistence type="evidence at protein level"/>
<gene>
    <name type="primary">virB</name>
    <name type="synonym">invE</name>
    <name type="ordered locus">CP0123</name>
</gene>
<dbReference type="EMBL" id="X14340">
    <property type="protein sequence ID" value="CAA32525.1"/>
    <property type="molecule type" value="Genomic_DNA"/>
</dbReference>
<dbReference type="EMBL" id="AL391753">
    <property type="protein sequence ID" value="CAC05798.1"/>
    <property type="molecule type" value="Genomic_DNA"/>
</dbReference>
<dbReference type="EMBL" id="AF348706">
    <property type="protein sequence ID" value="AAK18441.1"/>
    <property type="molecule type" value="Genomic_DNA"/>
</dbReference>
<dbReference type="EMBL" id="AY206439">
    <property type="protein sequence ID" value="AAP78986.1"/>
    <property type="molecule type" value="Genomic_DNA"/>
</dbReference>
<dbReference type="EMBL" id="AF386526">
    <property type="protein sequence ID" value="AAL72295.1"/>
    <property type="molecule type" value="Genomic_DNA"/>
</dbReference>
<dbReference type="PIR" id="S04379">
    <property type="entry name" value="S04379"/>
</dbReference>
<dbReference type="RefSeq" id="NP_085285.1">
    <property type="nucleotide sequence ID" value="NC_002698.1"/>
</dbReference>
<dbReference type="RefSeq" id="NP_858256.1">
    <property type="nucleotide sequence ID" value="NC_004851.1"/>
</dbReference>
<dbReference type="RefSeq" id="WP_000227976.1">
    <property type="nucleotide sequence ID" value="NZ_WPGS01000043.1"/>
</dbReference>
<dbReference type="RefSeq" id="YP_009062480.1">
    <property type="nucleotide sequence ID" value="NC_024996.1"/>
</dbReference>
<dbReference type="PDB" id="3VWB">
    <property type="method" value="X-ray"/>
    <property type="resolution" value="2.42 A"/>
    <property type="chains" value="A=129-250"/>
</dbReference>
<dbReference type="PDB" id="3W2A">
    <property type="method" value="X-ray"/>
    <property type="resolution" value="2.78 A"/>
    <property type="chains" value="A=129-250"/>
</dbReference>
<dbReference type="PDB" id="3W3C">
    <property type="method" value="X-ray"/>
    <property type="resolution" value="2.43 A"/>
    <property type="chains" value="A=129-250"/>
</dbReference>
<dbReference type="PDBsum" id="3VWB"/>
<dbReference type="PDBsum" id="3W2A"/>
<dbReference type="PDBsum" id="3W3C"/>
<dbReference type="SMR" id="P0A247"/>
<dbReference type="PaxDb" id="198214-CP0123"/>
<dbReference type="GeneID" id="1237991"/>
<dbReference type="KEGG" id="sfl:CP0123"/>
<dbReference type="PATRIC" id="fig|198214.7.peg.5378"/>
<dbReference type="HOGENOM" id="CLU_065144_0_0_6"/>
<dbReference type="EvolutionaryTrace" id="P0A247"/>
<dbReference type="Proteomes" id="UP000001006">
    <property type="component" value="Plasmid pCP301"/>
</dbReference>
<dbReference type="GO" id="GO:0003677">
    <property type="term" value="F:DNA binding"/>
    <property type="evidence" value="ECO:0007669"/>
    <property type="project" value="UniProtKB-KW"/>
</dbReference>
<dbReference type="CDD" id="cd16394">
    <property type="entry name" value="sopB_N"/>
    <property type="match status" value="1"/>
</dbReference>
<dbReference type="Gene3D" id="1.10.10.2830">
    <property type="match status" value="1"/>
</dbReference>
<dbReference type="InterPro" id="IPR004437">
    <property type="entry name" value="ParB/RepB/Spo0J"/>
</dbReference>
<dbReference type="InterPro" id="IPR003115">
    <property type="entry name" value="ParB/Sulfiredoxin_dom"/>
</dbReference>
<dbReference type="InterPro" id="IPR036086">
    <property type="entry name" value="ParB/Sulfiredoxin_sf"/>
</dbReference>
<dbReference type="InterPro" id="IPR014884">
    <property type="entry name" value="ParB_fam_C"/>
</dbReference>
<dbReference type="NCBIfam" id="TIGR00180">
    <property type="entry name" value="parB_part"/>
    <property type="match status" value="1"/>
</dbReference>
<dbReference type="PANTHER" id="PTHR38973:SF1">
    <property type="entry name" value="PLASMID PARTITION PROTEIN B"/>
    <property type="match status" value="1"/>
</dbReference>
<dbReference type="PANTHER" id="PTHR38973">
    <property type="entry name" value="PLASMID PARTITIONING CONTROL PROTEIN-RELATED"/>
    <property type="match status" value="1"/>
</dbReference>
<dbReference type="Pfam" id="PF08775">
    <property type="entry name" value="ParB"/>
    <property type="match status" value="1"/>
</dbReference>
<dbReference type="Pfam" id="PF02195">
    <property type="entry name" value="ParBc"/>
    <property type="match status" value="1"/>
</dbReference>
<dbReference type="SMART" id="SM00470">
    <property type="entry name" value="ParB"/>
    <property type="match status" value="1"/>
</dbReference>
<dbReference type="SUPFAM" id="SSF110849">
    <property type="entry name" value="ParB/Sulfiredoxin"/>
    <property type="match status" value="1"/>
</dbReference>
<keyword id="KW-0002">3D-structure</keyword>
<keyword id="KW-0010">Activator</keyword>
<keyword id="KW-0238">DNA-binding</keyword>
<keyword id="KW-0614">Plasmid</keyword>
<keyword id="KW-1185">Reference proteome</keyword>
<keyword id="KW-0804">Transcription</keyword>
<keyword id="KW-0805">Transcription regulation</keyword>
<keyword id="KW-0843">Virulence</keyword>
<reference key="1">
    <citation type="journal article" date="1989" name="Mol. Microbiol.">
        <title>A dual transcriptional activation system for the 230 kb plasmid genes coding for virulence-associated antigens of Shigella flexneri.</title>
        <authorList>
            <person name="Adler B."/>
            <person name="Sasakawa C."/>
            <person name="Tobe T."/>
            <person name="Makino S."/>
            <person name="Komatsu K."/>
            <person name="Yoshikawa M."/>
        </authorList>
    </citation>
    <scope>NUCLEOTIDE SEQUENCE [GENOMIC DNA]</scope>
    <source>
        <strain>YSH6200 / Serotype 2a</strain>
        <plasmid>pMYSH6000</plasmid>
    </source>
</reference>
<reference key="2">
    <citation type="journal article" date="2000" name="Mol. Microbiol.">
        <title>The virulence plasmid pWR100 and the repertoire of proteins secreted by the type III secretion apparatus of Shigella flexneri.</title>
        <authorList>
            <person name="Buchrieser C."/>
            <person name="Glaser P."/>
            <person name="Rusniok C."/>
            <person name="Nedjari H."/>
            <person name="d'Hauteville H."/>
            <person name="Kunst F."/>
            <person name="Sansonetti P.J."/>
            <person name="Parsot C."/>
        </authorList>
    </citation>
    <scope>NUCLEOTIDE SEQUENCE [GENOMIC DNA]</scope>
    <source>
        <strain>M90T / Serotype 5a</strain>
        <plasmid>pWR100</plasmid>
    </source>
</reference>
<reference key="3">
    <citation type="journal article" date="2001" name="Infect. Immun.">
        <title>Complete DNA sequence and analysis of the large virulence plasmid of Shigella flexneri.</title>
        <authorList>
            <person name="Venkatesan M.M."/>
            <person name="Goldberg M.B."/>
            <person name="Rose D.J."/>
            <person name="Grotbeck E.J."/>
            <person name="Burland V."/>
            <person name="Blattner F.R."/>
        </authorList>
    </citation>
    <scope>NUCLEOTIDE SEQUENCE [GENOMIC DNA]</scope>
    <source>
        <strain>M90T / Serotype 5a</strain>
        <plasmid>pWR501</plasmid>
    </source>
</reference>
<reference key="4">
    <citation type="journal article" date="2003" name="Infect. Immun.">
        <title>Comparison of two major forms of the Shigella virulence plasmid pINV: positive selection is a major force driving the divergence.</title>
        <authorList>
            <person name="Lan R."/>
            <person name="Stevenson G."/>
            <person name="Reeves P.R."/>
        </authorList>
    </citation>
    <scope>NUCLEOTIDE SEQUENCE [GENOMIC DNA]</scope>
    <source>
        <strain>M1382 / Serotype 6</strain>
        <plasmid>pINV_F6_M1382</plasmid>
    </source>
</reference>
<reference key="5">
    <citation type="journal article" date="2002" name="Nucleic Acids Res.">
        <title>Genome sequence of Shigella flexneri 2a: insights into pathogenicity through comparison with genomes of Escherichia coli K12 and O157.</title>
        <authorList>
            <person name="Jin Q."/>
            <person name="Yuan Z."/>
            <person name="Xu J."/>
            <person name="Wang Y."/>
            <person name="Shen Y."/>
            <person name="Lu W."/>
            <person name="Wang J."/>
            <person name="Liu H."/>
            <person name="Yang J."/>
            <person name="Yang F."/>
            <person name="Zhang X."/>
            <person name="Zhang J."/>
            <person name="Yang G."/>
            <person name="Wu H."/>
            <person name="Qu D."/>
            <person name="Dong J."/>
            <person name="Sun L."/>
            <person name="Xue Y."/>
            <person name="Zhao A."/>
            <person name="Gao Y."/>
            <person name="Zhu J."/>
            <person name="Kan B."/>
            <person name="Ding K."/>
            <person name="Chen S."/>
            <person name="Cheng H."/>
            <person name="Yao Z."/>
            <person name="He B."/>
            <person name="Chen R."/>
            <person name="Ma D."/>
            <person name="Qiang B."/>
            <person name="Wen Y."/>
            <person name="Hou Y."/>
            <person name="Yu J."/>
        </authorList>
    </citation>
    <scope>NUCLEOTIDE SEQUENCE [LARGE SCALE GENOMIC DNA]</scope>
    <source>
        <strain>301 / Serotype 2a</strain>
        <plasmid>pCP301</plasmid>
    </source>
</reference>
<geneLocation type="plasmid">
    <name>pWR100</name>
</geneLocation>
<geneLocation type="plasmid">
    <name>pWR501</name>
</geneLocation>
<geneLocation type="plasmid">
    <name>pMYSH6000</name>
</geneLocation>
<geneLocation type="plasmid">
    <name>pINV_F6_M1382</name>
</geneLocation>
<geneLocation type="plasmid">
    <name>pCP301</name>
</geneLocation>
<evidence type="ECO:0000250" key="1"/>
<evidence type="ECO:0000305" key="2"/>
<evidence type="ECO:0007829" key="3">
    <source>
        <dbReference type="PDB" id="3VWB"/>
    </source>
</evidence>
<sequence>MVDLCNDLLSIKEGQKKEFTLHSGNKVSFIKAKIPHKRIQDLTFVNQKTNVRDQESLTEESLADIIKTIKLQQFFPVIGREIDGRIEILDGTRRRASAIYAGADLEVLYSKEYISTLDARKLANDIQTAKEHSIRELGIGLNFLKVSGMSYKDIAKKENLSRAKVTRAFQAASVPQEIISLFPIASELNFNDYKILFNYYKGLEKANESLSSTLPILKEEIKDLDTNLPPDIYKKEILNIIKKSKNRKQNPSLKVDSLFISKDKRTYIKRKENKTNRTLIFTLSKINKTVQREIDEAIRDIISRHLSSS</sequence>
<accession>P0A247</accession>
<accession>P11656</accession>
<protein>
    <recommendedName>
        <fullName>Virulence regulon transcriptional activator VirB</fullName>
    </recommendedName>
    <alternativeName>
        <fullName>Cell invasion regulator InvE</fullName>
    </alternativeName>
</protein>
<organism>
    <name type="scientific">Shigella flexneri</name>
    <dbReference type="NCBI Taxonomy" id="623"/>
    <lineage>
        <taxon>Bacteria</taxon>
        <taxon>Pseudomonadati</taxon>
        <taxon>Pseudomonadota</taxon>
        <taxon>Gammaproteobacteria</taxon>
        <taxon>Enterobacterales</taxon>
        <taxon>Enterobacteriaceae</taxon>
        <taxon>Shigella</taxon>
    </lineage>
</organism>
<name>VIRB_SHIFL</name>
<comment type="function">
    <text>Transcription activator for the invasion antigens IpaB, IpaC and IpaD. VirB is itself regulated by VirF.</text>
</comment>
<comment type="similarity">
    <text evidence="2">Belongs to the ParB family.</text>
</comment>
<feature type="chain" id="PRO_0000178702" description="Virulence regulon transcriptional activator VirB">
    <location>
        <begin position="1"/>
        <end position="309"/>
    </location>
</feature>
<feature type="DNA-binding region" description="H-T-H motif" evidence="1">
    <location>
        <begin position="152"/>
        <end position="171"/>
    </location>
</feature>
<feature type="helix" evidence="3">
    <location>
        <begin position="134"/>
        <end position="140"/>
    </location>
</feature>
<feature type="helix" evidence="3">
    <location>
        <begin position="142"/>
        <end position="145"/>
    </location>
</feature>
<feature type="turn" evidence="3">
    <location>
        <begin position="146"/>
        <end position="148"/>
    </location>
</feature>
<feature type="helix" evidence="3">
    <location>
        <begin position="151"/>
        <end position="158"/>
    </location>
</feature>
<feature type="helix" evidence="3">
    <location>
        <begin position="162"/>
        <end position="172"/>
    </location>
</feature>
<feature type="helix" evidence="3">
    <location>
        <begin position="176"/>
        <end position="180"/>
    </location>
</feature>
<feature type="helix" evidence="3">
    <location>
        <begin position="185"/>
        <end position="187"/>
    </location>
</feature>
<feature type="helix" evidence="3">
    <location>
        <begin position="190"/>
        <end position="205"/>
    </location>
</feature>
<feature type="turn" evidence="3">
    <location>
        <begin position="211"/>
        <end position="213"/>
    </location>
</feature>
<feature type="helix" evidence="3">
    <location>
        <begin position="214"/>
        <end position="222"/>
    </location>
</feature>
<feature type="strand" evidence="3">
    <location>
        <begin position="227"/>
        <end position="229"/>
    </location>
</feature>
<feature type="helix" evidence="3">
    <location>
        <begin position="234"/>
        <end position="245"/>
    </location>
</feature>